<comment type="function">
    <text evidence="2">Component of the zona pellucida, an extracellular matrix surrounding oocytes which mediates sperm binding, induction of the acrosome reaction and prevents post-fertilization polyspermy. The zona pellucida is composed of 3 to 4 glycoproteins, ZP1, ZP2, ZP3, and ZP4. ZP2 may act as a secondary sperm receptor.</text>
</comment>
<comment type="subunit">
    <text evidence="2 3">Can form homopolymers that assemble into long fibers (in vitro). Polymers of ZP2 and ZP3 organized into long filaments cross-linked by ZP1 homodimers. Interacts with ZP3.</text>
</comment>
<comment type="subcellular location">
    <molecule>Processed zona pellucida sperm-binding protein 2</molecule>
    <subcellularLocation>
        <location evidence="2">Zona pellucida</location>
    </subcellularLocation>
</comment>
<comment type="subcellular location">
    <subcellularLocation>
        <location evidence="2">Cell membrane</location>
        <topology evidence="4">Single-pass type I membrane protein</topology>
    </subcellularLocation>
</comment>
<comment type="tissue specificity">
    <text evidence="6">Expressed in oocytes.</text>
</comment>
<comment type="domain">
    <text evidence="2">The ZP domain is involved in the polymerization of the ZP proteins to form the zona pellucida.</text>
</comment>
<comment type="PTM">
    <text evidence="2">Proteolytically cleaved before the transmembrane segment to yield the secreted ectodomain incorporated in the zona pellucida.</text>
</comment>
<comment type="PTM">
    <text evidence="2">Proteolytically cleaved in the N-terminal part by the metalloendopeptidase ASTL exocytosed from cortical granules after fertilization, yielding a N-terminal peptide of about 30 kDa which remains covalently attached to the C-terminal peptide via disulfide bond(s). This cleavage may play an important role in the post-fertilization block to polyspermy. Additional proteolytically cleavage of the N-terminal peptide of 30 kDa occurs in one-cell and two-cell embryos.</text>
</comment>
<comment type="PTM">
    <text evidence="2">N-glycosylated.</text>
</comment>
<comment type="PTM">
    <text evidence="2">O-glycosylated; contains sulfate-substituted glycans.</text>
</comment>
<comment type="similarity">
    <text evidence="8">Belongs to the ZP domain family. ZPA subfamily.</text>
</comment>
<feature type="signal peptide" evidence="2">
    <location>
        <begin position="1"/>
        <end position="35"/>
    </location>
</feature>
<feature type="chain" id="PRO_0000041695" description="Zona pellucida sperm-binding protein 2">
    <location>
        <begin position="36"/>
        <end position="638"/>
    </location>
</feature>
<feature type="chain" id="PRO_0000304562" description="Processed zona pellucida sperm-binding protein 2">
    <location>
        <begin position="36"/>
        <end status="unknown"/>
    </location>
</feature>
<feature type="propeptide" id="PRO_0000041696" description="Removed in mature form" evidence="2">
    <location>
        <begin position="639"/>
        <end position="716"/>
    </location>
</feature>
<feature type="topological domain" description="Extracellular" evidence="4">
    <location>
        <begin position="36"/>
        <end position="686"/>
    </location>
</feature>
<feature type="transmembrane region" description="Helical" evidence="4">
    <location>
        <begin position="687"/>
        <end position="706"/>
    </location>
</feature>
<feature type="topological domain" description="Cytoplasmic" evidence="4">
    <location>
        <begin position="707"/>
        <end position="716"/>
    </location>
</feature>
<feature type="domain" description="ZP" evidence="5">
    <location>
        <begin position="370"/>
        <end position="635"/>
    </location>
</feature>
<feature type="region of interest" description="Disordered" evidence="2">
    <location>
        <begin position="467"/>
        <end position="489"/>
    </location>
</feature>
<feature type="site" description="Cleavage; by ASTL" evidence="2">
    <location>
        <begin position="168"/>
        <end position="169"/>
    </location>
</feature>
<feature type="site" description="Cleavage" evidence="2">
    <location>
        <begin position="638"/>
        <end position="639"/>
    </location>
</feature>
<feature type="glycosylation site" description="N-linked (GlcNAc...) asparagine" evidence="4">
    <location>
        <position position="93"/>
    </location>
</feature>
<feature type="glycosylation site" description="N-linked (GlcNAc...) asparagine" evidence="4">
    <location>
        <position position="316"/>
    </location>
</feature>
<feature type="glycosylation site" description="N-linked (GlcNAc...) asparagine" evidence="4">
    <location>
        <position position="323"/>
    </location>
</feature>
<feature type="glycosylation site" description="O-linked (GalNAc...) threonine" evidence="1">
    <location>
        <position position="460"/>
    </location>
</feature>
<feature type="glycosylation site" description="N-linked (GlcNAc...) asparagine" evidence="4">
    <location>
        <position position="530"/>
    </location>
</feature>
<feature type="disulfide bond" evidence="2">
    <location>
        <begin position="52"/>
        <end position="135"/>
    </location>
</feature>
<feature type="disulfide bond" evidence="2">
    <location>
        <begin position="85"/>
        <end position="103"/>
    </location>
</feature>
<feature type="disulfide bond" evidence="2">
    <location>
        <begin position="371"/>
        <end position="463"/>
    </location>
</feature>
<feature type="disulfide bond" evidence="2">
    <location>
        <begin position="402"/>
        <end position="423"/>
    </location>
</feature>
<feature type="disulfide bond" evidence="2">
    <location>
        <begin position="543"/>
        <end position="613"/>
    </location>
</feature>
<feature type="disulfide bond" evidence="2">
    <location>
        <begin position="564"/>
        <end position="632"/>
    </location>
</feature>
<feature type="disulfide bond" evidence="2">
    <location>
        <begin position="618"/>
        <end position="628"/>
    </location>
</feature>
<feature type="sequence conflict" description="In Ref. 2; AAA31144." evidence="8" ref="2">
    <original>MAC</original>
    <variation>IPG</variation>
    <location>
        <begin position="1"/>
        <end position="3"/>
    </location>
</feature>
<feature type="sequence conflict" description="In Ref. 3; AAB33431." evidence="8" ref="3">
    <original>R</original>
    <variation>K</variation>
    <location>
        <position position="192"/>
    </location>
</feature>
<feature type="sequence conflict" description="In Ref. 1; BAA08092." evidence="8" ref="1">
    <original>L</original>
    <variation>Q</variation>
    <location>
        <position position="329"/>
    </location>
</feature>
<feature type="sequence conflict" description="In Ref. 1; BAA08092." evidence="8" ref="1">
    <original>K</original>
    <variation>R</variation>
    <location>
        <position position="339"/>
    </location>
</feature>
<feature type="sequence conflict" description="In Ref. 3; AAB33431." evidence="8" ref="3">
    <original>E</original>
    <variation>G</variation>
    <location>
        <position position="369"/>
    </location>
</feature>
<feature type="sequence conflict" description="In Ref. 2; AAA31144." evidence="8" ref="2">
    <original>YS</original>
    <variation>SR</variation>
    <location>
        <begin position="465"/>
        <end position="466"/>
    </location>
</feature>
<dbReference type="EMBL" id="D45064">
    <property type="protein sequence ID" value="BAA08092.1"/>
    <property type="molecule type" value="mRNA"/>
</dbReference>
<dbReference type="EMBL" id="L22170">
    <property type="protein sequence ID" value="AAA31144.1"/>
    <property type="molecule type" value="mRNA"/>
</dbReference>
<dbReference type="EMBL" id="S74651">
    <property type="protein sequence ID" value="AAB33431.2"/>
    <property type="molecule type" value="mRNA"/>
</dbReference>
<dbReference type="PIR" id="S70434">
    <property type="entry name" value="S70434"/>
</dbReference>
<dbReference type="RefSeq" id="NP_999013.1">
    <property type="nucleotide sequence ID" value="NM_213848.2"/>
</dbReference>
<dbReference type="SMR" id="P42099"/>
<dbReference type="FunCoup" id="P42099">
    <property type="interactions" value="81"/>
</dbReference>
<dbReference type="STRING" id="9823.ENSSSCP00000008380"/>
<dbReference type="GlyCosmos" id="P42099">
    <property type="glycosylation" value="5 sites, No reported glycans"/>
</dbReference>
<dbReference type="GlyGen" id="P42099">
    <property type="glycosylation" value="5 sites"/>
</dbReference>
<dbReference type="PaxDb" id="9823-ENSSSCP00000008380"/>
<dbReference type="Ensembl" id="ENSSSCT00030029668.1">
    <property type="protein sequence ID" value="ENSSSCP00030013325.1"/>
    <property type="gene ID" value="ENSSSCG00030021372.1"/>
</dbReference>
<dbReference type="Ensembl" id="ENSSSCT00040052907.1">
    <property type="protein sequence ID" value="ENSSSCP00040021996.1"/>
    <property type="gene ID" value="ENSSSCG00040039539.1"/>
</dbReference>
<dbReference type="Ensembl" id="ENSSSCT00060105621.1">
    <property type="protein sequence ID" value="ENSSSCP00060046460.1"/>
    <property type="gene ID" value="ENSSSCG00060076887.1"/>
</dbReference>
<dbReference type="Ensembl" id="ENSSSCT00105071013">
    <property type="protein sequence ID" value="ENSSSCP00105050310"/>
    <property type="gene ID" value="ENSSSCG00105037221"/>
</dbReference>
<dbReference type="Ensembl" id="ENSSSCT00130029778">
    <property type="protein sequence ID" value="ENSSSCP00130020454"/>
    <property type="gene ID" value="ENSSSCG00130015031"/>
</dbReference>
<dbReference type="GeneID" id="396846"/>
<dbReference type="KEGG" id="ssc:396846"/>
<dbReference type="CTD" id="7783"/>
<dbReference type="eggNOG" id="ENOG502QPI2">
    <property type="taxonomic scope" value="Eukaryota"/>
</dbReference>
<dbReference type="InParanoid" id="P42099"/>
<dbReference type="OrthoDB" id="9903747at2759"/>
<dbReference type="Reactome" id="R-SSC-2534343">
    <property type="pathway name" value="Interaction With Cumulus Cells And The Zona Pellucida"/>
</dbReference>
<dbReference type="Proteomes" id="UP000008227">
    <property type="component" value="Unplaced"/>
</dbReference>
<dbReference type="Proteomes" id="UP000314985">
    <property type="component" value="Unplaced"/>
</dbReference>
<dbReference type="Proteomes" id="UP000694570">
    <property type="component" value="Unplaced"/>
</dbReference>
<dbReference type="Proteomes" id="UP000694571">
    <property type="component" value="Unplaced"/>
</dbReference>
<dbReference type="Proteomes" id="UP000694720">
    <property type="component" value="Unplaced"/>
</dbReference>
<dbReference type="Proteomes" id="UP000694722">
    <property type="component" value="Unplaced"/>
</dbReference>
<dbReference type="Proteomes" id="UP000694723">
    <property type="component" value="Unplaced"/>
</dbReference>
<dbReference type="Proteomes" id="UP000694724">
    <property type="component" value="Unplaced"/>
</dbReference>
<dbReference type="Proteomes" id="UP000694725">
    <property type="component" value="Unplaced"/>
</dbReference>
<dbReference type="Proteomes" id="UP000694726">
    <property type="component" value="Unplaced"/>
</dbReference>
<dbReference type="Proteomes" id="UP000694727">
    <property type="component" value="Unplaced"/>
</dbReference>
<dbReference type="Proteomes" id="UP000694728">
    <property type="component" value="Unplaced"/>
</dbReference>
<dbReference type="GO" id="GO:0062023">
    <property type="term" value="C:collagen-containing extracellular matrix"/>
    <property type="evidence" value="ECO:0000250"/>
    <property type="project" value="UniProtKB"/>
</dbReference>
<dbReference type="GO" id="GO:0035805">
    <property type="term" value="C:egg coat"/>
    <property type="evidence" value="ECO:0000250"/>
    <property type="project" value="UniProtKB"/>
</dbReference>
<dbReference type="GO" id="GO:0005783">
    <property type="term" value="C:endoplasmic reticulum"/>
    <property type="evidence" value="ECO:0000250"/>
    <property type="project" value="UniProtKB"/>
</dbReference>
<dbReference type="GO" id="GO:0005576">
    <property type="term" value="C:extracellular region"/>
    <property type="evidence" value="ECO:0007669"/>
    <property type="project" value="UniProtKB-KW"/>
</dbReference>
<dbReference type="GO" id="GO:0005771">
    <property type="term" value="C:multivesicular body"/>
    <property type="evidence" value="ECO:0000250"/>
    <property type="project" value="UniProtKB"/>
</dbReference>
<dbReference type="GO" id="GO:0005886">
    <property type="term" value="C:plasma membrane"/>
    <property type="evidence" value="ECO:0000250"/>
    <property type="project" value="UniProtKB"/>
</dbReference>
<dbReference type="GO" id="GO:0032190">
    <property type="term" value="F:acrosin binding"/>
    <property type="evidence" value="ECO:0000318"/>
    <property type="project" value="GO_Central"/>
</dbReference>
<dbReference type="GO" id="GO:0035804">
    <property type="term" value="F:structural constituent of egg coat"/>
    <property type="evidence" value="ECO:0000250"/>
    <property type="project" value="UniProtKB"/>
</dbReference>
<dbReference type="GO" id="GO:0007339">
    <property type="term" value="P:binding of sperm to zona pellucida"/>
    <property type="evidence" value="ECO:0000250"/>
    <property type="project" value="UniProtKB"/>
</dbReference>
<dbReference type="GO" id="GO:0060468">
    <property type="term" value="P:prevention of polyspermy"/>
    <property type="evidence" value="ECO:0000250"/>
    <property type="project" value="UniProtKB"/>
</dbReference>
<dbReference type="FunFam" id="2.60.40.3210:FF:000006">
    <property type="entry name" value="Zona pellucida sperm-binding protein 2"/>
    <property type="match status" value="1"/>
</dbReference>
<dbReference type="FunFam" id="2.60.40.4100:FF:000004">
    <property type="entry name" value="Zona pellucida sperm-binding protein 2"/>
    <property type="match status" value="1"/>
</dbReference>
<dbReference type="Gene3D" id="2.60.40.4100">
    <property type="entry name" value="Zona pellucida, ZP-C domain"/>
    <property type="match status" value="1"/>
</dbReference>
<dbReference type="Gene3D" id="2.60.40.3210">
    <property type="entry name" value="Zona pellucida, ZP-N domain"/>
    <property type="match status" value="1"/>
</dbReference>
<dbReference type="InterPro" id="IPR051148">
    <property type="entry name" value="Zona_Pellucida_Domain_gp"/>
</dbReference>
<dbReference type="InterPro" id="IPR055355">
    <property type="entry name" value="ZP-C"/>
</dbReference>
<dbReference type="InterPro" id="IPR042235">
    <property type="entry name" value="ZP-C_dom"/>
</dbReference>
<dbReference type="InterPro" id="IPR055356">
    <property type="entry name" value="ZP-N"/>
</dbReference>
<dbReference type="InterPro" id="IPR048290">
    <property type="entry name" value="ZP_chr"/>
</dbReference>
<dbReference type="InterPro" id="IPR001507">
    <property type="entry name" value="ZP_dom"/>
</dbReference>
<dbReference type="InterPro" id="IPR017977">
    <property type="entry name" value="ZP_dom_CS"/>
</dbReference>
<dbReference type="PANTHER" id="PTHR23343">
    <property type="entry name" value="ZONA PELLUCIDA SPERM-BINDING PROTEIN"/>
    <property type="match status" value="1"/>
</dbReference>
<dbReference type="PANTHER" id="PTHR23343:SF4">
    <property type="entry name" value="ZONA PELLUCIDA SPERM-BINDING PROTEIN 2"/>
    <property type="match status" value="1"/>
</dbReference>
<dbReference type="Pfam" id="PF23736">
    <property type="entry name" value="Ig_ZP2"/>
    <property type="match status" value="1"/>
</dbReference>
<dbReference type="Pfam" id="PF23740">
    <property type="entry name" value="Ig_ZP2_3rd"/>
    <property type="match status" value="1"/>
</dbReference>
<dbReference type="Pfam" id="PF23738">
    <property type="entry name" value="Ig_ZP2_N"/>
    <property type="match status" value="1"/>
</dbReference>
<dbReference type="Pfam" id="PF00100">
    <property type="entry name" value="Zona_pellucida"/>
    <property type="match status" value="1"/>
</dbReference>
<dbReference type="Pfam" id="PF23344">
    <property type="entry name" value="ZP-N"/>
    <property type="match status" value="1"/>
</dbReference>
<dbReference type="PRINTS" id="PR00023">
    <property type="entry name" value="ZPELLUCIDA"/>
</dbReference>
<dbReference type="SMART" id="SM00241">
    <property type="entry name" value="ZP"/>
    <property type="match status" value="1"/>
</dbReference>
<dbReference type="PROSITE" id="PS00682">
    <property type="entry name" value="ZP_1"/>
    <property type="match status" value="1"/>
</dbReference>
<dbReference type="PROSITE" id="PS51034">
    <property type="entry name" value="ZP_2"/>
    <property type="match status" value="1"/>
</dbReference>
<reference key="1">
    <citation type="submission" date="1995-01" db="EMBL/GenBank/DDBJ databases">
        <authorList>
            <person name="Okazaki Y."/>
            <person name="Isojima S."/>
            <person name="Sugimoto M."/>
        </authorList>
    </citation>
    <scope>NUCLEOTIDE SEQUENCE [MRNA]</scope>
    <source>
        <tissue>Ovary</tissue>
    </source>
</reference>
<reference key="2">
    <citation type="submission" date="1993-07" db="EMBL/GenBank/DDBJ databases">
        <authorList>
            <person name="Yurewicz E.C."/>
            <person name="Hibler D."/>
            <person name="Fontenot G.K."/>
            <person name="Harris J."/>
        </authorList>
    </citation>
    <scope>NUCLEOTIDE SEQUENCE [MRNA]</scope>
    <source>
        <tissue>Ovary</tissue>
    </source>
</reference>
<reference key="3">
    <citation type="journal article" date="1995" name="Biochem. Biophys. Res. Commun.">
        <title>Cloning of a cDNA coding for porcine zona pellucida glycoprotein ZP1 and its genomic organization.</title>
        <authorList>
            <person name="Taya T."/>
            <person name="Yamasaki N."/>
            <person name="Tsubamoto H."/>
            <person name="Hasegawa A."/>
            <person name="Koyama K."/>
        </authorList>
    </citation>
    <scope>NUCLEOTIDE SEQUENCE [MRNA]</scope>
    <scope>TISSUE SPECIFICITY</scope>
</reference>
<accession>P42099</accession>
<protein>
    <recommendedName>
        <fullName>Zona pellucida sperm-binding protein 2</fullName>
    </recommendedName>
    <alternativeName>
        <fullName>Zona pellucida glycoprotein 2</fullName>
        <shortName>Zp-2</shortName>
    </alternativeName>
    <alternativeName>
        <fullName>Zona pellucida protein A</fullName>
    </alternativeName>
    <alternativeName>
        <fullName evidence="7">pZP1</fullName>
    </alternativeName>
    <component>
        <recommendedName>
            <fullName>Processed zona pellucida sperm-binding protein 2</fullName>
        </recommendedName>
    </component>
</protein>
<evidence type="ECO:0000250" key="1"/>
<evidence type="ECO:0000250" key="2">
    <source>
        <dbReference type="UniProtKB" id="P20239"/>
    </source>
</evidence>
<evidence type="ECO:0000250" key="3">
    <source>
        <dbReference type="UniProtKB" id="Q05996"/>
    </source>
</evidence>
<evidence type="ECO:0000255" key="4"/>
<evidence type="ECO:0000255" key="5">
    <source>
        <dbReference type="PROSITE-ProRule" id="PRU00375"/>
    </source>
</evidence>
<evidence type="ECO:0000269" key="6">
    <source>
    </source>
</evidence>
<evidence type="ECO:0000303" key="7">
    <source>
    </source>
</evidence>
<evidence type="ECO:0000305" key="8"/>
<keyword id="KW-1003">Cell membrane</keyword>
<keyword id="KW-0165">Cleavage on pair of basic residues</keyword>
<keyword id="KW-1015">Disulfide bond</keyword>
<keyword id="KW-0272">Extracellular matrix</keyword>
<keyword id="KW-0278">Fertilization</keyword>
<keyword id="KW-0325">Glycoprotein</keyword>
<keyword id="KW-0472">Membrane</keyword>
<keyword id="KW-0675">Receptor</keyword>
<keyword id="KW-1185">Reference proteome</keyword>
<keyword id="KW-0964">Secreted</keyword>
<keyword id="KW-0732">Signal</keyword>
<keyword id="KW-0812">Transmembrane</keyword>
<keyword id="KW-1133">Transmembrane helix</keyword>
<organism>
    <name type="scientific">Sus scrofa</name>
    <name type="common">Pig</name>
    <dbReference type="NCBI Taxonomy" id="9823"/>
    <lineage>
        <taxon>Eukaryota</taxon>
        <taxon>Metazoa</taxon>
        <taxon>Chordata</taxon>
        <taxon>Craniata</taxon>
        <taxon>Vertebrata</taxon>
        <taxon>Euteleostomi</taxon>
        <taxon>Mammalia</taxon>
        <taxon>Eutheria</taxon>
        <taxon>Laurasiatheria</taxon>
        <taxon>Artiodactyla</taxon>
        <taxon>Suina</taxon>
        <taxon>Suidae</taxon>
        <taxon>Sus</taxon>
    </lineage>
</organism>
<name>ZP2_PIG</name>
<sequence length="716" mass="79728">MACRHRGDSGRPLSWLSASWRSLLLFFPLVTSVNSIGVNQLVNTAFPGIVTCHENRMVVEFPRILGTKIQYTSVVDPLGLEMMNCTYVLDPENLTLKAPYEACTKRVRGHHQMTIRLIDDNAALRQEALMYHISCPVMGAEGPDQHSGSTICMKDFMSFTFNFFPGMADENVKREDSKQRMGWSLVVGDGERARTLTFQEAMTQGYNFLIENQKMNIQVSFHATGVTRYSQGNSHLYMVPLKLKHVSHGQSLILASQLICVADPVTCNATHVTLAIPEFPGKLKSVNLGSGNIAVSQLHKHGIEMETTNGLRLHFNQTLLKTNVSEKCLPHQLYLSSLKLTFHSQLEAVSMVIYPECLCESTVSLVSEELCTQDGFMDVKVHSHQTKPALNLDTLRVGDSSCQPTFKAPAQGLVQFRIPLNGCGTRHKFKNDKVIYENEIHALWADPPSAVSRDSEFRMTVRCSYSSSNMLINTNVESLPSPEASVKPGPLTLTLQTYPDNAYLQPYGDKEYPVVKYLRQPIYLEVRILNRTDPNIKLVLDDCWATSTEDPASLPQWNVVMDGCEYNLDNHRTTFHPVGSSVTYPNHHQRFDVKTFAFVSGAQGVSQLVYFHCSVFICNQLSPTFSLCSVTCHGPSRSRRATGTTEEEKMIVSLPGPILLLSDGSSLRDAVNSKGSRTNGYVAFKTMVAMVASAGIVATLGLISYLHKKRIMMLNH</sequence>
<proteinExistence type="evidence at transcript level"/>
<gene>
    <name type="primary">ZP2</name>
    <name type="synonym">ZPA</name>
</gene>